<evidence type="ECO:0000255" key="1"/>
<evidence type="ECO:0000255" key="2">
    <source>
        <dbReference type="PROSITE-ProRule" id="PRU00297"/>
    </source>
</evidence>
<evidence type="ECO:0000255" key="3">
    <source>
        <dbReference type="PROSITE-ProRule" id="PRU10012"/>
    </source>
</evidence>
<evidence type="ECO:0000305" key="4"/>
<protein>
    <recommendedName>
        <fullName>Peroxidase 15</fullName>
        <shortName>Atperox P15</shortName>
        <ecNumber>1.11.1.7</ecNumber>
    </recommendedName>
    <alternativeName>
        <fullName>ATP36</fullName>
    </alternativeName>
</protein>
<proteinExistence type="evidence at transcript level"/>
<organism>
    <name type="scientific">Arabidopsis thaliana</name>
    <name type="common">Mouse-ear cress</name>
    <dbReference type="NCBI Taxonomy" id="3702"/>
    <lineage>
        <taxon>Eukaryota</taxon>
        <taxon>Viridiplantae</taxon>
        <taxon>Streptophyta</taxon>
        <taxon>Embryophyta</taxon>
        <taxon>Tracheophyta</taxon>
        <taxon>Spermatophyta</taxon>
        <taxon>Magnoliopsida</taxon>
        <taxon>eudicotyledons</taxon>
        <taxon>Gunneridae</taxon>
        <taxon>Pentapetalae</taxon>
        <taxon>rosids</taxon>
        <taxon>malvids</taxon>
        <taxon>Brassicales</taxon>
        <taxon>Brassicaceae</taxon>
        <taxon>Camelineae</taxon>
        <taxon>Arabidopsis</taxon>
    </lineage>
</organism>
<keyword id="KW-0106">Calcium</keyword>
<keyword id="KW-1015">Disulfide bond</keyword>
<keyword id="KW-0325">Glycoprotein</keyword>
<keyword id="KW-0349">Heme</keyword>
<keyword id="KW-0376">Hydrogen peroxide</keyword>
<keyword id="KW-0408">Iron</keyword>
<keyword id="KW-0479">Metal-binding</keyword>
<keyword id="KW-0560">Oxidoreductase</keyword>
<keyword id="KW-0575">Peroxidase</keyword>
<keyword id="KW-1185">Reference proteome</keyword>
<keyword id="KW-0964">Secreted</keyword>
<keyword id="KW-0732">Signal</keyword>
<sequence length="338" mass="37079">MARIGSFLIILYLIYALTLCICDDDESNYGGDKGNLFPGFYRSSCPRAEEIVRSVVAKAVARETRMAASLMRLHFHDCFVQGCDGSLLLDTSGSIVTEKNSNPNSRSARGFEVVDEIKAALENECPNTVSCADALTLAARDSSVLTGGPSWMVPLGRRDSTSASLSGSNNNIPAPNNTFNTIVTRFNNQGLDLTDVVALSGSHTIGFSRCTSFRQRLYNQSGNGSPDRTLEQSYAANLRQRCPRSGGDQNLSELDINSAGRFDNSYFKNLIENMGLLNSDEVLFSSNEQSRELVKKYAEDQEEFFEQFAESMIKMGNISPLTGSSGEIRKNCRKINNS</sequence>
<name>PER15_ARATH</name>
<comment type="function">
    <text>Removal of H(2)O(2), oxidation of toxic reductants, biosynthesis and degradation of lignin, suberization, auxin catabolism, response to environmental stresses such as wounding, pathogen attack and oxidative stress. These functions might be dependent on each isozyme/isoform in each plant tissue.</text>
</comment>
<comment type="catalytic activity">
    <reaction>
        <text>2 a phenolic donor + H2O2 = 2 a phenolic radical donor + 2 H2O</text>
        <dbReference type="Rhea" id="RHEA:56136"/>
        <dbReference type="ChEBI" id="CHEBI:15377"/>
        <dbReference type="ChEBI" id="CHEBI:16240"/>
        <dbReference type="ChEBI" id="CHEBI:139520"/>
        <dbReference type="ChEBI" id="CHEBI:139521"/>
        <dbReference type="EC" id="1.11.1.7"/>
    </reaction>
</comment>
<comment type="cofactor">
    <cofactor evidence="2">
        <name>heme b</name>
        <dbReference type="ChEBI" id="CHEBI:60344"/>
    </cofactor>
    <text evidence="2">Binds 1 heme b (iron(II)-protoporphyrin IX) group per subunit.</text>
</comment>
<comment type="cofactor">
    <cofactor evidence="2">
        <name>Ca(2+)</name>
        <dbReference type="ChEBI" id="CHEBI:29108"/>
    </cofactor>
    <text evidence="2">Binds 2 calcium ions per subunit.</text>
</comment>
<comment type="subcellular location">
    <subcellularLocation>
        <location evidence="2">Secreted</location>
    </subcellularLocation>
</comment>
<comment type="miscellaneous">
    <text>There are 73 peroxidase genes in A.thaliana.</text>
</comment>
<comment type="similarity">
    <text evidence="2">Belongs to the peroxidase family. Classical plant (class III) peroxidase subfamily.</text>
</comment>
<dbReference type="EC" id="1.11.1.7"/>
<dbReference type="EMBL" id="AC007212">
    <property type="protein sequence ID" value="AAD31351.1"/>
    <property type="molecule type" value="Genomic_DNA"/>
</dbReference>
<dbReference type="EMBL" id="CP002685">
    <property type="protein sequence ID" value="AEC06731.1"/>
    <property type="molecule type" value="Genomic_DNA"/>
</dbReference>
<dbReference type="EMBL" id="AY081298">
    <property type="protein sequence ID" value="AAL91187.1"/>
    <property type="molecule type" value="mRNA"/>
</dbReference>
<dbReference type="EMBL" id="BT002557">
    <property type="protein sequence ID" value="AAO00917.1"/>
    <property type="molecule type" value="mRNA"/>
</dbReference>
<dbReference type="EMBL" id="AY085060">
    <property type="protein sequence ID" value="AAM61616.1"/>
    <property type="molecule type" value="mRNA"/>
</dbReference>
<dbReference type="PIR" id="H84560">
    <property type="entry name" value="H84560"/>
</dbReference>
<dbReference type="RefSeq" id="NP_179407.1">
    <property type="nucleotide sequence ID" value="NM_127372.4"/>
</dbReference>
<dbReference type="SMR" id="Q9SI16"/>
<dbReference type="FunCoup" id="Q9SI16">
    <property type="interactions" value="127"/>
</dbReference>
<dbReference type="STRING" id="3702.Q9SI16"/>
<dbReference type="PeroxiBase" id="96">
    <property type="entry name" value="AtPrx15"/>
</dbReference>
<dbReference type="GlyCosmos" id="Q9SI16">
    <property type="glycosylation" value="3 sites, No reported glycans"/>
</dbReference>
<dbReference type="GlyGen" id="Q9SI16">
    <property type="glycosylation" value="3 sites"/>
</dbReference>
<dbReference type="PaxDb" id="3702-AT2G18150.1"/>
<dbReference type="ProteomicsDB" id="236688"/>
<dbReference type="EnsemblPlants" id="AT2G18150.1">
    <property type="protein sequence ID" value="AT2G18150.1"/>
    <property type="gene ID" value="AT2G18150"/>
</dbReference>
<dbReference type="GeneID" id="816328"/>
<dbReference type="Gramene" id="AT2G18150.1">
    <property type="protein sequence ID" value="AT2G18150.1"/>
    <property type="gene ID" value="AT2G18150"/>
</dbReference>
<dbReference type="KEGG" id="ath:AT2G18150"/>
<dbReference type="Araport" id="AT2G18150"/>
<dbReference type="TAIR" id="AT2G18150"/>
<dbReference type="eggNOG" id="ENOG502QR5A">
    <property type="taxonomic scope" value="Eukaryota"/>
</dbReference>
<dbReference type="HOGENOM" id="CLU_010543_0_1_1"/>
<dbReference type="InParanoid" id="Q9SI16"/>
<dbReference type="OMA" id="CICDDDE"/>
<dbReference type="PhylomeDB" id="Q9SI16"/>
<dbReference type="BioCyc" id="ARA:AT2G18150-MONOMER"/>
<dbReference type="PRO" id="PR:Q9SI16"/>
<dbReference type="Proteomes" id="UP000006548">
    <property type="component" value="Chromosome 2"/>
</dbReference>
<dbReference type="ExpressionAtlas" id="Q9SI16">
    <property type="expression patterns" value="baseline and differential"/>
</dbReference>
<dbReference type="GO" id="GO:0005576">
    <property type="term" value="C:extracellular region"/>
    <property type="evidence" value="ECO:0007669"/>
    <property type="project" value="UniProtKB-SubCell"/>
</dbReference>
<dbReference type="GO" id="GO:0020037">
    <property type="term" value="F:heme binding"/>
    <property type="evidence" value="ECO:0007669"/>
    <property type="project" value="InterPro"/>
</dbReference>
<dbReference type="GO" id="GO:0140825">
    <property type="term" value="F:lactoperoxidase activity"/>
    <property type="evidence" value="ECO:0007669"/>
    <property type="project" value="UniProtKB-EC"/>
</dbReference>
<dbReference type="GO" id="GO:0046872">
    <property type="term" value="F:metal ion binding"/>
    <property type="evidence" value="ECO:0007669"/>
    <property type="project" value="UniProtKB-KW"/>
</dbReference>
<dbReference type="GO" id="GO:0042744">
    <property type="term" value="P:hydrogen peroxide catabolic process"/>
    <property type="evidence" value="ECO:0007669"/>
    <property type="project" value="UniProtKB-KW"/>
</dbReference>
<dbReference type="GO" id="GO:0006979">
    <property type="term" value="P:response to oxidative stress"/>
    <property type="evidence" value="ECO:0007669"/>
    <property type="project" value="InterPro"/>
</dbReference>
<dbReference type="CDD" id="cd00693">
    <property type="entry name" value="secretory_peroxidase"/>
    <property type="match status" value="1"/>
</dbReference>
<dbReference type="FunFam" id="1.10.420.10:FF:000001">
    <property type="entry name" value="Peroxidase"/>
    <property type="match status" value="1"/>
</dbReference>
<dbReference type="FunFam" id="1.10.520.10:FF:000001">
    <property type="entry name" value="Peroxidase"/>
    <property type="match status" value="1"/>
</dbReference>
<dbReference type="Gene3D" id="1.10.520.10">
    <property type="match status" value="1"/>
</dbReference>
<dbReference type="Gene3D" id="1.10.420.10">
    <property type="entry name" value="Peroxidase, domain 2"/>
    <property type="match status" value="1"/>
</dbReference>
<dbReference type="InterPro" id="IPR002016">
    <property type="entry name" value="Haem_peroxidase"/>
</dbReference>
<dbReference type="InterPro" id="IPR010255">
    <property type="entry name" value="Haem_peroxidase_sf"/>
</dbReference>
<dbReference type="InterPro" id="IPR000823">
    <property type="entry name" value="Peroxidase_pln"/>
</dbReference>
<dbReference type="InterPro" id="IPR019794">
    <property type="entry name" value="Peroxidases_AS"/>
</dbReference>
<dbReference type="InterPro" id="IPR019793">
    <property type="entry name" value="Peroxidases_heam-ligand_BS"/>
</dbReference>
<dbReference type="InterPro" id="IPR033905">
    <property type="entry name" value="Secretory_peroxidase"/>
</dbReference>
<dbReference type="PANTHER" id="PTHR31388:SF104">
    <property type="entry name" value="PEROXIDASE 14-RELATED"/>
    <property type="match status" value="1"/>
</dbReference>
<dbReference type="PANTHER" id="PTHR31388">
    <property type="entry name" value="PEROXIDASE 72-RELATED"/>
    <property type="match status" value="1"/>
</dbReference>
<dbReference type="Pfam" id="PF00141">
    <property type="entry name" value="peroxidase"/>
    <property type="match status" value="1"/>
</dbReference>
<dbReference type="PRINTS" id="PR00458">
    <property type="entry name" value="PEROXIDASE"/>
</dbReference>
<dbReference type="PRINTS" id="PR00461">
    <property type="entry name" value="PLPEROXIDASE"/>
</dbReference>
<dbReference type="SUPFAM" id="SSF48113">
    <property type="entry name" value="Heme-dependent peroxidases"/>
    <property type="match status" value="1"/>
</dbReference>
<dbReference type="PROSITE" id="PS00435">
    <property type="entry name" value="PEROXIDASE_1"/>
    <property type="match status" value="1"/>
</dbReference>
<dbReference type="PROSITE" id="PS00436">
    <property type="entry name" value="PEROXIDASE_2"/>
    <property type="match status" value="1"/>
</dbReference>
<dbReference type="PROSITE" id="PS50873">
    <property type="entry name" value="PEROXIDASE_4"/>
    <property type="match status" value="1"/>
</dbReference>
<reference key="1">
    <citation type="journal article" date="1999" name="Nature">
        <title>Sequence and analysis of chromosome 2 of the plant Arabidopsis thaliana.</title>
        <authorList>
            <person name="Lin X."/>
            <person name="Kaul S."/>
            <person name="Rounsley S.D."/>
            <person name="Shea T.P."/>
            <person name="Benito M.-I."/>
            <person name="Town C.D."/>
            <person name="Fujii C.Y."/>
            <person name="Mason T.M."/>
            <person name="Bowman C.L."/>
            <person name="Barnstead M.E."/>
            <person name="Feldblyum T.V."/>
            <person name="Buell C.R."/>
            <person name="Ketchum K.A."/>
            <person name="Lee J.J."/>
            <person name="Ronning C.M."/>
            <person name="Koo H.L."/>
            <person name="Moffat K.S."/>
            <person name="Cronin L.A."/>
            <person name="Shen M."/>
            <person name="Pai G."/>
            <person name="Van Aken S."/>
            <person name="Umayam L."/>
            <person name="Tallon L.J."/>
            <person name="Gill J.E."/>
            <person name="Adams M.D."/>
            <person name="Carrera A.J."/>
            <person name="Creasy T.H."/>
            <person name="Goodman H.M."/>
            <person name="Somerville C.R."/>
            <person name="Copenhaver G.P."/>
            <person name="Preuss D."/>
            <person name="Nierman W.C."/>
            <person name="White O."/>
            <person name="Eisen J.A."/>
            <person name="Salzberg S.L."/>
            <person name="Fraser C.M."/>
            <person name="Venter J.C."/>
        </authorList>
    </citation>
    <scope>NUCLEOTIDE SEQUENCE [LARGE SCALE GENOMIC DNA]</scope>
    <source>
        <strain>cv. Columbia</strain>
    </source>
</reference>
<reference key="2">
    <citation type="journal article" date="2017" name="Plant J.">
        <title>Araport11: a complete reannotation of the Arabidopsis thaliana reference genome.</title>
        <authorList>
            <person name="Cheng C.Y."/>
            <person name="Krishnakumar V."/>
            <person name="Chan A.P."/>
            <person name="Thibaud-Nissen F."/>
            <person name="Schobel S."/>
            <person name="Town C.D."/>
        </authorList>
    </citation>
    <scope>GENOME REANNOTATION</scope>
    <source>
        <strain>cv. Columbia</strain>
    </source>
</reference>
<reference key="3">
    <citation type="journal article" date="2003" name="Science">
        <title>Empirical analysis of transcriptional activity in the Arabidopsis genome.</title>
        <authorList>
            <person name="Yamada K."/>
            <person name="Lim J."/>
            <person name="Dale J.M."/>
            <person name="Chen H."/>
            <person name="Shinn P."/>
            <person name="Palm C.J."/>
            <person name="Southwick A.M."/>
            <person name="Wu H.C."/>
            <person name="Kim C.J."/>
            <person name="Nguyen M."/>
            <person name="Pham P.K."/>
            <person name="Cheuk R.F."/>
            <person name="Karlin-Newmann G."/>
            <person name="Liu S.X."/>
            <person name="Lam B."/>
            <person name="Sakano H."/>
            <person name="Wu T."/>
            <person name="Yu G."/>
            <person name="Miranda M."/>
            <person name="Quach H.L."/>
            <person name="Tripp M."/>
            <person name="Chang C.H."/>
            <person name="Lee J.M."/>
            <person name="Toriumi M.J."/>
            <person name="Chan M.M."/>
            <person name="Tang C.C."/>
            <person name="Onodera C.S."/>
            <person name="Deng J.M."/>
            <person name="Akiyama K."/>
            <person name="Ansari Y."/>
            <person name="Arakawa T."/>
            <person name="Banh J."/>
            <person name="Banno F."/>
            <person name="Bowser L."/>
            <person name="Brooks S.Y."/>
            <person name="Carninci P."/>
            <person name="Chao Q."/>
            <person name="Choy N."/>
            <person name="Enju A."/>
            <person name="Goldsmith A.D."/>
            <person name="Gurjal M."/>
            <person name="Hansen N.F."/>
            <person name="Hayashizaki Y."/>
            <person name="Johnson-Hopson C."/>
            <person name="Hsuan V.W."/>
            <person name="Iida K."/>
            <person name="Karnes M."/>
            <person name="Khan S."/>
            <person name="Koesema E."/>
            <person name="Ishida J."/>
            <person name="Jiang P.X."/>
            <person name="Jones T."/>
            <person name="Kawai J."/>
            <person name="Kamiya A."/>
            <person name="Meyers C."/>
            <person name="Nakajima M."/>
            <person name="Narusaka M."/>
            <person name="Seki M."/>
            <person name="Sakurai T."/>
            <person name="Satou M."/>
            <person name="Tamse R."/>
            <person name="Vaysberg M."/>
            <person name="Wallender E.K."/>
            <person name="Wong C."/>
            <person name="Yamamura Y."/>
            <person name="Yuan S."/>
            <person name="Shinozaki K."/>
            <person name="Davis R.W."/>
            <person name="Theologis A."/>
            <person name="Ecker J.R."/>
        </authorList>
    </citation>
    <scope>NUCLEOTIDE SEQUENCE [LARGE SCALE MRNA]</scope>
    <source>
        <strain>cv. Columbia</strain>
    </source>
</reference>
<reference key="4">
    <citation type="submission" date="2002-03" db="EMBL/GenBank/DDBJ databases">
        <title>Full-length cDNA from Arabidopsis thaliana.</title>
        <authorList>
            <person name="Brover V.V."/>
            <person name="Troukhan M.E."/>
            <person name="Alexandrov N.A."/>
            <person name="Lu Y.-P."/>
            <person name="Flavell R.B."/>
            <person name="Feldmann K.A."/>
        </authorList>
    </citation>
    <scope>NUCLEOTIDE SEQUENCE [LARGE SCALE MRNA]</scope>
</reference>
<reference key="5">
    <citation type="journal article" date="2002" name="Gene">
        <title>Analysis and expression of the class III peroxidase large gene family in Arabidopsis thaliana.</title>
        <authorList>
            <person name="Tognolli M."/>
            <person name="Penel C."/>
            <person name="Greppin H."/>
            <person name="Simon P."/>
        </authorList>
    </citation>
    <scope>GENE FAMILY ORGANIZATION</scope>
    <scope>NOMENCLATURE</scope>
    <source>
        <strain>cv. Columbia</strain>
    </source>
</reference>
<feature type="signal peptide" evidence="1">
    <location>
        <begin position="1"/>
        <end position="22"/>
    </location>
</feature>
<feature type="chain" id="PRO_0000023681" description="Peroxidase 15">
    <location>
        <begin position="23"/>
        <end position="338"/>
    </location>
</feature>
<feature type="active site" description="Proton acceptor" evidence="2 3">
    <location>
        <position position="76"/>
    </location>
</feature>
<feature type="binding site" evidence="2">
    <location>
        <position position="77"/>
    </location>
    <ligand>
        <name>Ca(2+)</name>
        <dbReference type="ChEBI" id="CHEBI:29108"/>
        <label>1</label>
    </ligand>
</feature>
<feature type="binding site" evidence="2">
    <location>
        <position position="80"/>
    </location>
    <ligand>
        <name>Ca(2+)</name>
        <dbReference type="ChEBI" id="CHEBI:29108"/>
        <label>1</label>
    </ligand>
</feature>
<feature type="binding site" evidence="2">
    <location>
        <position position="82"/>
    </location>
    <ligand>
        <name>Ca(2+)</name>
        <dbReference type="ChEBI" id="CHEBI:29108"/>
        <label>1</label>
    </ligand>
</feature>
<feature type="binding site" evidence="2">
    <location>
        <position position="84"/>
    </location>
    <ligand>
        <name>Ca(2+)</name>
        <dbReference type="ChEBI" id="CHEBI:29108"/>
        <label>1</label>
    </ligand>
</feature>
<feature type="binding site" evidence="2">
    <location>
        <position position="86"/>
    </location>
    <ligand>
        <name>Ca(2+)</name>
        <dbReference type="ChEBI" id="CHEBI:29108"/>
        <label>1</label>
    </ligand>
</feature>
<feature type="binding site" evidence="2">
    <location>
        <position position="173"/>
    </location>
    <ligand>
        <name>substrate</name>
    </ligand>
</feature>
<feature type="binding site" description="axial binding residue" evidence="2">
    <location>
        <position position="203"/>
    </location>
    <ligand>
        <name>heme b</name>
        <dbReference type="ChEBI" id="CHEBI:60344"/>
    </ligand>
    <ligandPart>
        <name>Fe</name>
        <dbReference type="ChEBI" id="CHEBI:18248"/>
    </ligandPart>
</feature>
<feature type="binding site" evidence="2">
    <location>
        <position position="204"/>
    </location>
    <ligand>
        <name>Ca(2+)</name>
        <dbReference type="ChEBI" id="CHEBI:29108"/>
        <label>2</label>
    </ligand>
</feature>
<feature type="binding site" evidence="2">
    <location>
        <position position="255"/>
    </location>
    <ligand>
        <name>Ca(2+)</name>
        <dbReference type="ChEBI" id="CHEBI:29108"/>
        <label>2</label>
    </ligand>
</feature>
<feature type="binding site" evidence="2">
    <location>
        <position position="258"/>
    </location>
    <ligand>
        <name>Ca(2+)</name>
        <dbReference type="ChEBI" id="CHEBI:29108"/>
        <label>2</label>
    </ligand>
</feature>
<feature type="binding site" evidence="2">
    <location>
        <position position="263"/>
    </location>
    <ligand>
        <name>Ca(2+)</name>
        <dbReference type="ChEBI" id="CHEBI:29108"/>
        <label>2</label>
    </ligand>
</feature>
<feature type="site" description="Transition state stabilizer" evidence="2">
    <location>
        <position position="72"/>
    </location>
</feature>
<feature type="glycosylation site" description="N-linked (GlcNAc...) asparagine" evidence="1">
    <location>
        <position position="176"/>
    </location>
</feature>
<feature type="glycosylation site" description="N-linked (GlcNAc...) asparagine" evidence="1">
    <location>
        <position position="219"/>
    </location>
</feature>
<feature type="glycosylation site" description="N-linked (GlcNAc...) asparagine" evidence="1">
    <location>
        <position position="250"/>
    </location>
</feature>
<feature type="disulfide bond" evidence="2">
    <location>
        <begin position="45"/>
        <end position="125"/>
    </location>
</feature>
<feature type="disulfide bond" evidence="2">
    <location>
        <begin position="78"/>
        <end position="83"/>
    </location>
</feature>
<feature type="disulfide bond" evidence="2">
    <location>
        <begin position="131"/>
        <end position="332"/>
    </location>
</feature>
<feature type="disulfide bond" evidence="2">
    <location>
        <begin position="210"/>
        <end position="242"/>
    </location>
</feature>
<feature type="sequence conflict" description="In Ref. 4; AAM61616." evidence="4" ref="4">
    <original>I</original>
    <variation>T</variation>
    <location>
        <position position="14"/>
    </location>
</feature>
<feature type="sequence conflict" description="In Ref. 4; AAM61616." evidence="4" ref="4">
    <original>I</original>
    <variation>V</variation>
    <location>
        <position position="21"/>
    </location>
</feature>
<gene>
    <name type="primary">PER15</name>
    <name type="synonym">P15</name>
    <name type="ordered locus">At2g18150</name>
    <name type="ORF">F8D23.7</name>
</gene>
<accession>Q9SI16</accession>